<keyword id="KW-0255">Endonuclease</keyword>
<keyword id="KW-0378">Hydrolase</keyword>
<keyword id="KW-0540">Nuclease</keyword>
<keyword id="KW-1185">Reference proteome</keyword>
<keyword id="KW-0694">RNA-binding</keyword>
<keyword id="KW-0819">tRNA processing</keyword>
<accession>Q5WAG0</accession>
<evidence type="ECO:0000255" key="1">
    <source>
        <dbReference type="HAMAP-Rule" id="MF_00227"/>
    </source>
</evidence>
<reference key="1">
    <citation type="submission" date="2003-10" db="EMBL/GenBank/DDBJ databases">
        <title>The complete genome sequence of the alkaliphilic Bacillus clausii KSM-K16.</title>
        <authorList>
            <person name="Takaki Y."/>
            <person name="Kageyama Y."/>
            <person name="Shimamura S."/>
            <person name="Suzuki H."/>
            <person name="Nishi S."/>
            <person name="Hatada Y."/>
            <person name="Kawai S."/>
            <person name="Ito S."/>
            <person name="Horikoshi K."/>
        </authorList>
    </citation>
    <scope>NUCLEOTIDE SEQUENCE [LARGE SCALE GENOMIC DNA]</scope>
    <source>
        <strain>KSM-K16</strain>
    </source>
</reference>
<gene>
    <name evidence="1" type="primary">rnpA</name>
    <name type="ordered locus">ABC4120</name>
</gene>
<sequence length="122" mass="14101">MKKEQRIKKNREFSAVFKKGSSMANRQFVLYVLPKEGQDRLRLGLSVSKRVGNAVCRNRIKRLVRAAFHELEGQLRPDCDYVVIARNPARDLSFKEVRSSLEHVMKKAKVLAPLYGNRKKDS</sequence>
<proteinExistence type="inferred from homology"/>
<protein>
    <recommendedName>
        <fullName evidence="1">Ribonuclease P protein component</fullName>
        <shortName evidence="1">RNase P protein</shortName>
        <shortName evidence="1">RNaseP protein</shortName>
        <ecNumber evidence="1">3.1.26.5</ecNumber>
    </recommendedName>
    <alternativeName>
        <fullName evidence="1">Protein C5</fullName>
    </alternativeName>
</protein>
<comment type="function">
    <text evidence="1">RNaseP catalyzes the removal of the 5'-leader sequence from pre-tRNA to produce the mature 5'-terminus. It can also cleave other RNA substrates such as 4.5S RNA. The protein component plays an auxiliary but essential role in vivo by binding to the 5'-leader sequence and broadening the substrate specificity of the ribozyme.</text>
</comment>
<comment type="catalytic activity">
    <reaction evidence="1">
        <text>Endonucleolytic cleavage of RNA, removing 5'-extranucleotides from tRNA precursor.</text>
        <dbReference type="EC" id="3.1.26.5"/>
    </reaction>
</comment>
<comment type="subunit">
    <text evidence="1">Consists of a catalytic RNA component (M1 or rnpB) and a protein subunit.</text>
</comment>
<comment type="similarity">
    <text evidence="1">Belongs to the RnpA family.</text>
</comment>
<dbReference type="EC" id="3.1.26.5" evidence="1"/>
<dbReference type="EMBL" id="AP006627">
    <property type="protein sequence ID" value="BAD66651.1"/>
    <property type="molecule type" value="Genomic_DNA"/>
</dbReference>
<dbReference type="RefSeq" id="WP_011248953.1">
    <property type="nucleotide sequence ID" value="NC_006582.1"/>
</dbReference>
<dbReference type="SMR" id="Q5WAG0"/>
<dbReference type="STRING" id="66692.ABC4120"/>
<dbReference type="KEGG" id="bcl:ABC4120"/>
<dbReference type="eggNOG" id="COG0594">
    <property type="taxonomic scope" value="Bacteria"/>
</dbReference>
<dbReference type="HOGENOM" id="CLU_117179_9_1_9"/>
<dbReference type="OrthoDB" id="9810867at2"/>
<dbReference type="Proteomes" id="UP000001168">
    <property type="component" value="Chromosome"/>
</dbReference>
<dbReference type="GO" id="GO:0030677">
    <property type="term" value="C:ribonuclease P complex"/>
    <property type="evidence" value="ECO:0007669"/>
    <property type="project" value="TreeGrafter"/>
</dbReference>
<dbReference type="GO" id="GO:0042781">
    <property type="term" value="F:3'-tRNA processing endoribonuclease activity"/>
    <property type="evidence" value="ECO:0007669"/>
    <property type="project" value="TreeGrafter"/>
</dbReference>
<dbReference type="GO" id="GO:0004526">
    <property type="term" value="F:ribonuclease P activity"/>
    <property type="evidence" value="ECO:0007669"/>
    <property type="project" value="UniProtKB-UniRule"/>
</dbReference>
<dbReference type="GO" id="GO:0000049">
    <property type="term" value="F:tRNA binding"/>
    <property type="evidence" value="ECO:0007669"/>
    <property type="project" value="UniProtKB-UniRule"/>
</dbReference>
<dbReference type="GO" id="GO:0001682">
    <property type="term" value="P:tRNA 5'-leader removal"/>
    <property type="evidence" value="ECO:0007669"/>
    <property type="project" value="UniProtKB-UniRule"/>
</dbReference>
<dbReference type="FunFam" id="3.30.230.10:FF:000021">
    <property type="entry name" value="Ribonuclease P protein component"/>
    <property type="match status" value="1"/>
</dbReference>
<dbReference type="Gene3D" id="3.30.230.10">
    <property type="match status" value="1"/>
</dbReference>
<dbReference type="HAMAP" id="MF_00227">
    <property type="entry name" value="RNase_P"/>
    <property type="match status" value="1"/>
</dbReference>
<dbReference type="InterPro" id="IPR020568">
    <property type="entry name" value="Ribosomal_Su5_D2-typ_SF"/>
</dbReference>
<dbReference type="InterPro" id="IPR014721">
    <property type="entry name" value="Ribsml_uS5_D2-typ_fold_subgr"/>
</dbReference>
<dbReference type="InterPro" id="IPR000100">
    <property type="entry name" value="RNase_P"/>
</dbReference>
<dbReference type="InterPro" id="IPR020539">
    <property type="entry name" value="RNase_P_CS"/>
</dbReference>
<dbReference type="NCBIfam" id="TIGR00188">
    <property type="entry name" value="rnpA"/>
    <property type="match status" value="1"/>
</dbReference>
<dbReference type="PANTHER" id="PTHR33992">
    <property type="entry name" value="RIBONUCLEASE P PROTEIN COMPONENT"/>
    <property type="match status" value="1"/>
</dbReference>
<dbReference type="PANTHER" id="PTHR33992:SF1">
    <property type="entry name" value="RIBONUCLEASE P PROTEIN COMPONENT"/>
    <property type="match status" value="1"/>
</dbReference>
<dbReference type="Pfam" id="PF00825">
    <property type="entry name" value="Ribonuclease_P"/>
    <property type="match status" value="1"/>
</dbReference>
<dbReference type="SUPFAM" id="SSF54211">
    <property type="entry name" value="Ribosomal protein S5 domain 2-like"/>
    <property type="match status" value="1"/>
</dbReference>
<dbReference type="PROSITE" id="PS00648">
    <property type="entry name" value="RIBONUCLEASE_P"/>
    <property type="match status" value="1"/>
</dbReference>
<organism>
    <name type="scientific">Shouchella clausii (strain KSM-K16)</name>
    <name type="common">Alkalihalobacillus clausii</name>
    <dbReference type="NCBI Taxonomy" id="66692"/>
    <lineage>
        <taxon>Bacteria</taxon>
        <taxon>Bacillati</taxon>
        <taxon>Bacillota</taxon>
        <taxon>Bacilli</taxon>
        <taxon>Bacillales</taxon>
        <taxon>Bacillaceae</taxon>
        <taxon>Shouchella</taxon>
    </lineage>
</organism>
<feature type="chain" id="PRO_0000198423" description="Ribonuclease P protein component">
    <location>
        <begin position="1"/>
        <end position="122"/>
    </location>
</feature>
<name>RNPA_SHOC1</name>